<name>SYM_HELPJ</name>
<comment type="function">
    <text evidence="1">Is required not only for elongation of protein synthesis but also for the initiation of all mRNA translation through initiator tRNA(fMet) aminoacylation.</text>
</comment>
<comment type="catalytic activity">
    <reaction>
        <text>tRNA(Met) + L-methionine + ATP = L-methionyl-tRNA(Met) + AMP + diphosphate</text>
        <dbReference type="Rhea" id="RHEA:13481"/>
        <dbReference type="Rhea" id="RHEA-COMP:9667"/>
        <dbReference type="Rhea" id="RHEA-COMP:9698"/>
        <dbReference type="ChEBI" id="CHEBI:30616"/>
        <dbReference type="ChEBI" id="CHEBI:33019"/>
        <dbReference type="ChEBI" id="CHEBI:57844"/>
        <dbReference type="ChEBI" id="CHEBI:78442"/>
        <dbReference type="ChEBI" id="CHEBI:78530"/>
        <dbReference type="ChEBI" id="CHEBI:456215"/>
        <dbReference type="EC" id="6.1.1.10"/>
    </reaction>
</comment>
<comment type="cofactor">
    <cofactor evidence="1">
        <name>Zn(2+)</name>
        <dbReference type="ChEBI" id="CHEBI:29105"/>
    </cofactor>
    <text evidence="1">Binds 1 zinc ion per subunit.</text>
</comment>
<comment type="subunit">
    <text evidence="1">Homodimer.</text>
</comment>
<comment type="subcellular location">
    <subcellularLocation>
        <location evidence="1">Cytoplasm</location>
    </subcellularLocation>
</comment>
<comment type="similarity">
    <text evidence="2">Belongs to the class-I aminoacyl-tRNA synthetase family. MetG type 2A subfamily.</text>
</comment>
<feature type="chain" id="PRO_0000139222" description="Methionine--tRNA ligase">
    <location>
        <begin position="1"/>
        <end position="656"/>
    </location>
</feature>
<feature type="domain" description="tRNA-binding">
    <location>
        <begin position="555"/>
        <end position="656"/>
    </location>
</feature>
<feature type="short sequence motif" description="'HIGH' region">
    <location>
        <begin position="11"/>
        <end position="21"/>
    </location>
</feature>
<feature type="short sequence motif" description="'KMSKS' region">
    <location>
        <begin position="301"/>
        <end position="305"/>
    </location>
</feature>
<feature type="binding site" evidence="1">
    <location>
        <position position="126"/>
    </location>
    <ligand>
        <name>Zn(2+)</name>
        <dbReference type="ChEBI" id="CHEBI:29105"/>
    </ligand>
</feature>
<feature type="binding site" evidence="1">
    <location>
        <position position="129"/>
    </location>
    <ligand>
        <name>Zn(2+)</name>
        <dbReference type="ChEBI" id="CHEBI:29105"/>
    </ligand>
</feature>
<feature type="binding site" evidence="1">
    <location>
        <position position="147"/>
    </location>
    <ligand>
        <name>Zn(2+)</name>
        <dbReference type="ChEBI" id="CHEBI:29105"/>
    </ligand>
</feature>
<feature type="binding site" evidence="1">
    <location>
        <position position="150"/>
    </location>
    <ligand>
        <name>Zn(2+)</name>
        <dbReference type="ChEBI" id="CHEBI:29105"/>
    </ligand>
</feature>
<feature type="binding site" evidence="1">
    <location>
        <position position="304"/>
    </location>
    <ligand>
        <name>ATP</name>
        <dbReference type="ChEBI" id="CHEBI:30616"/>
    </ligand>
</feature>
<reference key="1">
    <citation type="journal article" date="1999" name="Nature">
        <title>Genomic sequence comparison of two unrelated isolates of the human gastric pathogen Helicobacter pylori.</title>
        <authorList>
            <person name="Alm R.A."/>
            <person name="Ling L.-S.L."/>
            <person name="Moir D.T."/>
            <person name="King B.L."/>
            <person name="Brown E.D."/>
            <person name="Doig P.C."/>
            <person name="Smith D.R."/>
            <person name="Noonan B."/>
            <person name="Guild B.C."/>
            <person name="deJonge B.L."/>
            <person name="Carmel G."/>
            <person name="Tummino P.J."/>
            <person name="Caruso A."/>
            <person name="Uria-Nickelsen M."/>
            <person name="Mills D.M."/>
            <person name="Ives C."/>
            <person name="Gibson R."/>
            <person name="Merberg D."/>
            <person name="Mills S.D."/>
            <person name="Jiang Q."/>
            <person name="Taylor D.E."/>
            <person name="Vovis G.F."/>
            <person name="Trust T.J."/>
        </authorList>
    </citation>
    <scope>NUCLEOTIDE SEQUENCE [LARGE SCALE GENOMIC DNA]</scope>
    <source>
        <strain>J99 / ATCC 700824</strain>
    </source>
</reference>
<proteinExistence type="inferred from homology"/>
<dbReference type="EC" id="6.1.1.10"/>
<dbReference type="EMBL" id="AE001439">
    <property type="protein sequence ID" value="AAD06543.1"/>
    <property type="molecule type" value="Genomic_DNA"/>
</dbReference>
<dbReference type="PIR" id="H71867">
    <property type="entry name" value="H71867"/>
</dbReference>
<dbReference type="RefSeq" id="WP_001172571.1">
    <property type="nucleotide sequence ID" value="NC_000921.1"/>
</dbReference>
<dbReference type="SMR" id="Q9ZKG9"/>
<dbReference type="KEGG" id="hpj:jhp_0967"/>
<dbReference type="eggNOG" id="COG0073">
    <property type="taxonomic scope" value="Bacteria"/>
</dbReference>
<dbReference type="eggNOG" id="COG0143">
    <property type="taxonomic scope" value="Bacteria"/>
</dbReference>
<dbReference type="Proteomes" id="UP000000804">
    <property type="component" value="Chromosome"/>
</dbReference>
<dbReference type="GO" id="GO:0005737">
    <property type="term" value="C:cytoplasm"/>
    <property type="evidence" value="ECO:0007669"/>
    <property type="project" value="UniProtKB-SubCell"/>
</dbReference>
<dbReference type="GO" id="GO:0005524">
    <property type="term" value="F:ATP binding"/>
    <property type="evidence" value="ECO:0007669"/>
    <property type="project" value="UniProtKB-UniRule"/>
</dbReference>
<dbReference type="GO" id="GO:0046872">
    <property type="term" value="F:metal ion binding"/>
    <property type="evidence" value="ECO:0007669"/>
    <property type="project" value="UniProtKB-KW"/>
</dbReference>
<dbReference type="GO" id="GO:0004825">
    <property type="term" value="F:methionine-tRNA ligase activity"/>
    <property type="evidence" value="ECO:0007669"/>
    <property type="project" value="UniProtKB-UniRule"/>
</dbReference>
<dbReference type="GO" id="GO:0000049">
    <property type="term" value="F:tRNA binding"/>
    <property type="evidence" value="ECO:0007669"/>
    <property type="project" value="UniProtKB-KW"/>
</dbReference>
<dbReference type="GO" id="GO:0006431">
    <property type="term" value="P:methionyl-tRNA aminoacylation"/>
    <property type="evidence" value="ECO:0007669"/>
    <property type="project" value="UniProtKB-UniRule"/>
</dbReference>
<dbReference type="CDD" id="cd00814">
    <property type="entry name" value="MetRS_core"/>
    <property type="match status" value="1"/>
</dbReference>
<dbReference type="CDD" id="cd02800">
    <property type="entry name" value="tRNA_bind_EcMetRS_like"/>
    <property type="match status" value="1"/>
</dbReference>
<dbReference type="FunFam" id="2.170.220.10:FF:000002">
    <property type="entry name" value="Methionine--tRNA ligase"/>
    <property type="match status" value="1"/>
</dbReference>
<dbReference type="FunFam" id="2.40.50.140:FF:000042">
    <property type="entry name" value="Methionine--tRNA ligase"/>
    <property type="match status" value="1"/>
</dbReference>
<dbReference type="Gene3D" id="2.170.220.10">
    <property type="match status" value="1"/>
</dbReference>
<dbReference type="Gene3D" id="3.40.50.620">
    <property type="entry name" value="HUPs"/>
    <property type="match status" value="1"/>
</dbReference>
<dbReference type="Gene3D" id="1.10.730.10">
    <property type="entry name" value="Isoleucyl-tRNA Synthetase, Domain 1"/>
    <property type="match status" value="1"/>
</dbReference>
<dbReference type="Gene3D" id="2.40.50.140">
    <property type="entry name" value="Nucleic acid-binding proteins"/>
    <property type="match status" value="1"/>
</dbReference>
<dbReference type="HAMAP" id="MF_01228">
    <property type="entry name" value="Met_tRNA_synth_type2"/>
    <property type="match status" value="1"/>
</dbReference>
<dbReference type="InterPro" id="IPR004495">
    <property type="entry name" value="Met-tRNA-synth_bsu_C"/>
</dbReference>
<dbReference type="InterPro" id="IPR014758">
    <property type="entry name" value="Met-tRNA_synth"/>
</dbReference>
<dbReference type="InterPro" id="IPR023457">
    <property type="entry name" value="Met-tRNA_synth_2"/>
</dbReference>
<dbReference type="InterPro" id="IPR015413">
    <property type="entry name" value="Methionyl/Leucyl_tRNA_Synth"/>
</dbReference>
<dbReference type="InterPro" id="IPR033911">
    <property type="entry name" value="MetRS_core"/>
</dbReference>
<dbReference type="InterPro" id="IPR012340">
    <property type="entry name" value="NA-bd_OB-fold"/>
</dbReference>
<dbReference type="InterPro" id="IPR014729">
    <property type="entry name" value="Rossmann-like_a/b/a_fold"/>
</dbReference>
<dbReference type="InterPro" id="IPR002547">
    <property type="entry name" value="tRNA-bd_dom"/>
</dbReference>
<dbReference type="InterPro" id="IPR009080">
    <property type="entry name" value="tRNAsynth_Ia_anticodon-bd"/>
</dbReference>
<dbReference type="NCBIfam" id="TIGR00398">
    <property type="entry name" value="metG"/>
    <property type="match status" value="1"/>
</dbReference>
<dbReference type="NCBIfam" id="TIGR00399">
    <property type="entry name" value="metG_C_term"/>
    <property type="match status" value="1"/>
</dbReference>
<dbReference type="NCBIfam" id="NF008900">
    <property type="entry name" value="PRK12267.1"/>
    <property type="match status" value="1"/>
</dbReference>
<dbReference type="PANTHER" id="PTHR43326:SF1">
    <property type="entry name" value="METHIONINE--TRNA LIGASE, MITOCHONDRIAL"/>
    <property type="match status" value="1"/>
</dbReference>
<dbReference type="PANTHER" id="PTHR43326">
    <property type="entry name" value="METHIONYL-TRNA SYNTHETASE"/>
    <property type="match status" value="1"/>
</dbReference>
<dbReference type="Pfam" id="PF09334">
    <property type="entry name" value="tRNA-synt_1g"/>
    <property type="match status" value="2"/>
</dbReference>
<dbReference type="Pfam" id="PF01588">
    <property type="entry name" value="tRNA_bind"/>
    <property type="match status" value="1"/>
</dbReference>
<dbReference type="PRINTS" id="PR01041">
    <property type="entry name" value="TRNASYNTHMET"/>
</dbReference>
<dbReference type="SUPFAM" id="SSF47323">
    <property type="entry name" value="Anticodon-binding domain of a subclass of class I aminoacyl-tRNA synthetases"/>
    <property type="match status" value="1"/>
</dbReference>
<dbReference type="SUPFAM" id="SSF50249">
    <property type="entry name" value="Nucleic acid-binding proteins"/>
    <property type="match status" value="1"/>
</dbReference>
<dbReference type="SUPFAM" id="SSF52374">
    <property type="entry name" value="Nucleotidylyl transferase"/>
    <property type="match status" value="1"/>
</dbReference>
<dbReference type="PROSITE" id="PS50886">
    <property type="entry name" value="TRBD"/>
    <property type="match status" value="1"/>
</dbReference>
<sequence length="656" mass="75433">MQKSLITTPIYYVNDIPHIGHAYTTLIADTLKKYYTLQGEEVFFLTGTDEHGQKIEQSARLRNQSPKAYADSISAIFKNQWDFFNLDYDGFIRTTDSEHQKCVQNAFEIMFEKGDIYKGTYSGYYCVSCESYCAVSKVDNTDSKVLCPDCLRETTLLEEESYFFKLSAYEKPLLEFYAKNPEAILPIYRKNEVTSFIEQGLLDLSITRTSFEWGIPLPKKMNDPKHVVYVWLDALLNYASALGYLNGLDNKMAHFERARHIVGKDILRFHAIYWPAFLMSLNLPLFKQLCVHGWWTIEGVKMSKSLGNVLDAQKLAMEYGIEELRYFLLREVPFGQDGDFSKKALVERINANLNNDLGNLLNRLLGMAKKYFNYSLKSTKITAYYPKELEKAHQILDNANSFVPKMQLHKALEELFNIYDFLNKLIAKEEPWVLHKNNESEKLEALLSLIANTLLQSSFLLYAFMPKSAMKLASAFRVEITPNNYERFFKAKKLQDMVLQDTEPLFSKIEKIEKIEKIEKIEKIEKGEEALAEKAEKKEKEKAPPTQENYISIEDFKKVEIKVGLIKEAQRIEKSNKLLRLKVDLGENRLRQIISGIALDYEPESLVGQMVCVVANLKPAKLMGEMSEGMILAVRDNDNLALISPTREKIAGSLIS</sequence>
<gene>
    <name type="primary">metG</name>
    <name type="ordered locus">jhp_0967</name>
</gene>
<accession>Q9ZKG9</accession>
<protein>
    <recommendedName>
        <fullName>Methionine--tRNA ligase</fullName>
        <ecNumber>6.1.1.10</ecNumber>
    </recommendedName>
    <alternativeName>
        <fullName>Methionyl-tRNA synthetase</fullName>
        <shortName>MetRS</shortName>
    </alternativeName>
</protein>
<evidence type="ECO:0000250" key="1"/>
<evidence type="ECO:0000305" key="2"/>
<keyword id="KW-0030">Aminoacyl-tRNA synthetase</keyword>
<keyword id="KW-0067">ATP-binding</keyword>
<keyword id="KW-0963">Cytoplasm</keyword>
<keyword id="KW-0436">Ligase</keyword>
<keyword id="KW-0479">Metal-binding</keyword>
<keyword id="KW-0547">Nucleotide-binding</keyword>
<keyword id="KW-0648">Protein biosynthesis</keyword>
<keyword id="KW-0694">RNA-binding</keyword>
<keyword id="KW-0820">tRNA-binding</keyword>
<keyword id="KW-0862">Zinc</keyword>
<organism>
    <name type="scientific">Helicobacter pylori (strain J99 / ATCC 700824)</name>
    <name type="common">Campylobacter pylori J99</name>
    <dbReference type="NCBI Taxonomy" id="85963"/>
    <lineage>
        <taxon>Bacteria</taxon>
        <taxon>Pseudomonadati</taxon>
        <taxon>Campylobacterota</taxon>
        <taxon>Epsilonproteobacteria</taxon>
        <taxon>Campylobacterales</taxon>
        <taxon>Helicobacteraceae</taxon>
        <taxon>Helicobacter</taxon>
    </lineage>
</organism>